<protein>
    <recommendedName>
        <fullName evidence="1">Membrane-bound lytic murein transglycosylase C</fullName>
        <ecNumber evidence="1">4.2.2.n1</ecNumber>
    </recommendedName>
    <alternativeName>
        <fullName evidence="1">Murein lyase C</fullName>
    </alternativeName>
</protein>
<sequence>MKKILALLVIAPLLVSCSGNKNQVENEVFVKDTNGFEILMGQFAHNIENIWGLKEVLIAGPKDYVKYTDQYQTRSHINFDAGTITIETIATTNPAAHLRQAIITTLLMGDDPGSIDLYSDVNDIQISKEPFLYGQVLDNNGEPIRWEWRAAHFADYLLQNKMQTRTSGLHVISFVTIQLVPNHLDKRAHKYLPLVRKSAARYGVEESLILAIMQTESSFNPYAVSRSDALGLMQVVQHTAGKDVFKLKGKSGQPSRSYLFDPENNIDAGTAYLSILQNTYLGGIQNATSRRYAVITSYNGGAGSVLRVFHSDKNKAVGIINTMSPGDVFQTLTTKHPSGESRRYLVKVNSAQKNYRRY</sequence>
<accession>Q666M2</accession>
<evidence type="ECO:0000255" key="1">
    <source>
        <dbReference type="HAMAP-Rule" id="MF_01616"/>
    </source>
</evidence>
<evidence type="ECO:0000305" key="2"/>
<reference key="1">
    <citation type="journal article" date="2004" name="Proc. Natl. Acad. Sci. U.S.A.">
        <title>Insights into the evolution of Yersinia pestis through whole-genome comparison with Yersinia pseudotuberculosis.</title>
        <authorList>
            <person name="Chain P.S.G."/>
            <person name="Carniel E."/>
            <person name="Larimer F.W."/>
            <person name="Lamerdin J."/>
            <person name="Stoutland P.O."/>
            <person name="Regala W.M."/>
            <person name="Georgescu A.M."/>
            <person name="Vergez L.M."/>
            <person name="Land M.L."/>
            <person name="Motin V.L."/>
            <person name="Brubaker R.R."/>
            <person name="Fowler J."/>
            <person name="Hinnebusch J."/>
            <person name="Marceau M."/>
            <person name="Medigue C."/>
            <person name="Simonet M."/>
            <person name="Chenal-Francisque V."/>
            <person name="Souza B."/>
            <person name="Dacheux D."/>
            <person name="Elliott J.M."/>
            <person name="Derbise A."/>
            <person name="Hauser L.J."/>
            <person name="Garcia E."/>
        </authorList>
    </citation>
    <scope>NUCLEOTIDE SEQUENCE [LARGE SCALE GENOMIC DNA]</scope>
    <source>
        <strain>IP32953</strain>
    </source>
</reference>
<feature type="signal peptide" evidence="1">
    <location>
        <begin position="1"/>
        <end position="16"/>
    </location>
</feature>
<feature type="chain" id="PRO_0000032800" description="Membrane-bound lytic murein transglycosylase C">
    <location>
        <begin position="17"/>
        <end position="358"/>
    </location>
</feature>
<feature type="lipid moiety-binding region" description="N-palmitoyl cysteine" evidence="1">
    <location>
        <position position="17"/>
    </location>
</feature>
<feature type="lipid moiety-binding region" description="S-diacylglycerol cysteine" evidence="1">
    <location>
        <position position="17"/>
    </location>
</feature>
<proteinExistence type="inferred from homology"/>
<name>MLTC_YERPS</name>
<organism>
    <name type="scientific">Yersinia pseudotuberculosis serotype I (strain IP32953)</name>
    <dbReference type="NCBI Taxonomy" id="273123"/>
    <lineage>
        <taxon>Bacteria</taxon>
        <taxon>Pseudomonadati</taxon>
        <taxon>Pseudomonadota</taxon>
        <taxon>Gammaproteobacteria</taxon>
        <taxon>Enterobacterales</taxon>
        <taxon>Yersiniaceae</taxon>
        <taxon>Yersinia</taxon>
    </lineage>
</organism>
<comment type="function">
    <text evidence="1">Murein-degrading enzyme. May play a role in recycling of muropeptides during cell elongation and/or cell division.</text>
</comment>
<comment type="catalytic activity">
    <reaction evidence="1">
        <text>Exolytic cleavage of the (1-&gt;4)-beta-glycosidic linkage between N-acetylmuramic acid (MurNAc) and N-acetylglucosamine (GlcNAc) residues in peptidoglycan, from either the reducing or the non-reducing ends of the peptidoglycan chains, with concomitant formation of a 1,6-anhydrobond in the MurNAc residue.</text>
        <dbReference type="EC" id="4.2.2.n1"/>
    </reaction>
</comment>
<comment type="subcellular location">
    <subcellularLocation>
        <location evidence="1">Cell outer membrane</location>
        <topology evidence="1">Lipid-anchor</topology>
    </subcellularLocation>
</comment>
<comment type="similarity">
    <text evidence="1">Belongs to the transglycosylase Slt family.</text>
</comment>
<comment type="sequence caution" evidence="2">
    <conflict type="erroneous initiation">
        <sequence resource="EMBL-CDS" id="CAH22464"/>
    </conflict>
</comment>
<keyword id="KW-0998">Cell outer membrane</keyword>
<keyword id="KW-0961">Cell wall biogenesis/degradation</keyword>
<keyword id="KW-0449">Lipoprotein</keyword>
<keyword id="KW-0456">Lyase</keyword>
<keyword id="KW-0472">Membrane</keyword>
<keyword id="KW-0564">Palmitate</keyword>
<keyword id="KW-0732">Signal</keyword>
<dbReference type="EC" id="4.2.2.n1" evidence="1"/>
<dbReference type="EMBL" id="BX936398">
    <property type="protein sequence ID" value="CAH22464.1"/>
    <property type="status" value="ALT_INIT"/>
    <property type="molecule type" value="Genomic_DNA"/>
</dbReference>
<dbReference type="RefSeq" id="WP_002209995.1">
    <property type="nucleotide sequence ID" value="NZ_CP009712.1"/>
</dbReference>
<dbReference type="SMR" id="Q666M2"/>
<dbReference type="CAZy" id="GH23">
    <property type="family name" value="Glycoside Hydrolase Family 23"/>
</dbReference>
<dbReference type="GeneID" id="57973687"/>
<dbReference type="KEGG" id="ypo:BZ17_3384"/>
<dbReference type="KEGG" id="yps:YPTB3226"/>
<dbReference type="PATRIC" id="fig|273123.14.peg.3551"/>
<dbReference type="Proteomes" id="UP000001011">
    <property type="component" value="Chromosome"/>
</dbReference>
<dbReference type="GO" id="GO:0009279">
    <property type="term" value="C:cell outer membrane"/>
    <property type="evidence" value="ECO:0007669"/>
    <property type="project" value="UniProtKB-SubCell"/>
</dbReference>
<dbReference type="GO" id="GO:0016798">
    <property type="term" value="F:hydrolase activity, acting on glycosyl bonds"/>
    <property type="evidence" value="ECO:0007669"/>
    <property type="project" value="InterPro"/>
</dbReference>
<dbReference type="GO" id="GO:0008933">
    <property type="term" value="F:peptidoglycan lytic transglycosylase activity"/>
    <property type="evidence" value="ECO:0007669"/>
    <property type="project" value="UniProtKB-UniRule"/>
</dbReference>
<dbReference type="GO" id="GO:0016998">
    <property type="term" value="P:cell wall macromolecule catabolic process"/>
    <property type="evidence" value="ECO:0007669"/>
    <property type="project" value="UniProtKB-UniRule"/>
</dbReference>
<dbReference type="GO" id="GO:0071555">
    <property type="term" value="P:cell wall organization"/>
    <property type="evidence" value="ECO:0007669"/>
    <property type="project" value="UniProtKB-KW"/>
</dbReference>
<dbReference type="GO" id="GO:0000270">
    <property type="term" value="P:peptidoglycan metabolic process"/>
    <property type="evidence" value="ECO:0007669"/>
    <property type="project" value="InterPro"/>
</dbReference>
<dbReference type="CDD" id="cd16893">
    <property type="entry name" value="LT_MltC_MltE"/>
    <property type="match status" value="1"/>
</dbReference>
<dbReference type="FunFam" id="1.10.530.10:FF:000002">
    <property type="entry name" value="Membrane-bound lytic murein transglycosylase C"/>
    <property type="match status" value="1"/>
</dbReference>
<dbReference type="Gene3D" id="1.10.530.10">
    <property type="match status" value="1"/>
</dbReference>
<dbReference type="HAMAP" id="MF_01616">
    <property type="entry name" value="MltC"/>
    <property type="match status" value="1"/>
</dbReference>
<dbReference type="InterPro" id="IPR023346">
    <property type="entry name" value="Lysozyme-like_dom_sf"/>
</dbReference>
<dbReference type="InterPro" id="IPR023664">
    <property type="entry name" value="Murein_transglycosylaseC"/>
</dbReference>
<dbReference type="InterPro" id="IPR024570">
    <property type="entry name" value="Murein_transglycosylaseC_N"/>
</dbReference>
<dbReference type="InterPro" id="IPR000189">
    <property type="entry name" value="Transglyc_AS"/>
</dbReference>
<dbReference type="InterPro" id="IPR008258">
    <property type="entry name" value="Transglycosylase_SLT_dom_1"/>
</dbReference>
<dbReference type="NCBIfam" id="NF008670">
    <property type="entry name" value="PRK11671.1"/>
    <property type="match status" value="1"/>
</dbReference>
<dbReference type="PANTHER" id="PTHR37423:SF2">
    <property type="entry name" value="MEMBRANE-BOUND LYTIC MUREIN TRANSGLYCOSYLASE C"/>
    <property type="match status" value="1"/>
</dbReference>
<dbReference type="PANTHER" id="PTHR37423">
    <property type="entry name" value="SOLUBLE LYTIC MUREIN TRANSGLYCOSYLASE-RELATED"/>
    <property type="match status" value="1"/>
</dbReference>
<dbReference type="Pfam" id="PF11873">
    <property type="entry name" value="Mltc_N"/>
    <property type="match status" value="1"/>
</dbReference>
<dbReference type="Pfam" id="PF01464">
    <property type="entry name" value="SLT"/>
    <property type="match status" value="1"/>
</dbReference>
<dbReference type="SUPFAM" id="SSF53955">
    <property type="entry name" value="Lysozyme-like"/>
    <property type="match status" value="1"/>
</dbReference>
<dbReference type="PROSITE" id="PS51257">
    <property type="entry name" value="PROKAR_LIPOPROTEIN"/>
    <property type="match status" value="1"/>
</dbReference>
<dbReference type="PROSITE" id="PS00922">
    <property type="entry name" value="TRANSGLYCOSYLASE"/>
    <property type="match status" value="1"/>
</dbReference>
<gene>
    <name evidence="1" type="primary">mltC</name>
    <name type="ordered locus">YPTB3226</name>
</gene>